<gene>
    <name evidence="1" type="primary">nuoA</name>
    <name type="ordered locus">RC0485</name>
</gene>
<feature type="chain" id="PRO_0000117875" description="NADH-quinone oxidoreductase subunit A">
    <location>
        <begin position="1"/>
        <end position="123"/>
    </location>
</feature>
<feature type="transmembrane region" description="Helical" evidence="1">
    <location>
        <begin position="11"/>
        <end position="31"/>
    </location>
</feature>
<feature type="transmembrane region" description="Helical" evidence="1">
    <location>
        <begin position="64"/>
        <end position="84"/>
    </location>
</feature>
<feature type="transmembrane region" description="Helical" evidence="1">
    <location>
        <begin position="93"/>
        <end position="113"/>
    </location>
</feature>
<protein>
    <recommendedName>
        <fullName evidence="1">NADH-quinone oxidoreductase subunit A</fullName>
        <ecNumber evidence="1">7.1.1.-</ecNumber>
    </recommendedName>
    <alternativeName>
        <fullName evidence="1">NADH dehydrogenase I subunit A</fullName>
    </alternativeName>
    <alternativeName>
        <fullName evidence="1">NDH-1 subunit A</fullName>
    </alternativeName>
    <alternativeName>
        <fullName evidence="1">NUO1</fullName>
    </alternativeName>
</protein>
<evidence type="ECO:0000255" key="1">
    <source>
        <dbReference type="HAMAP-Rule" id="MF_01394"/>
    </source>
</evidence>
<evidence type="ECO:0000305" key="2"/>
<name>NUOA_RICCN</name>
<reference key="1">
    <citation type="journal article" date="2001" name="Science">
        <title>Mechanisms of evolution in Rickettsia conorii and R. prowazekii.</title>
        <authorList>
            <person name="Ogata H."/>
            <person name="Audic S."/>
            <person name="Renesto-Audiffren P."/>
            <person name="Fournier P.-E."/>
            <person name="Barbe V."/>
            <person name="Samson D."/>
            <person name="Roux V."/>
            <person name="Cossart P."/>
            <person name="Weissenbach J."/>
            <person name="Claverie J.-M."/>
            <person name="Raoult D."/>
        </authorList>
    </citation>
    <scope>NUCLEOTIDE SEQUENCE [LARGE SCALE GENOMIC DNA]</scope>
    <source>
        <strain>ATCC VR-613 / Malish 7</strain>
    </source>
</reference>
<proteinExistence type="inferred from homology"/>
<accession>Q92ID5</accession>
<keyword id="KW-0997">Cell inner membrane</keyword>
<keyword id="KW-1003">Cell membrane</keyword>
<keyword id="KW-0472">Membrane</keyword>
<keyword id="KW-0520">NAD</keyword>
<keyword id="KW-0874">Quinone</keyword>
<keyword id="KW-1278">Translocase</keyword>
<keyword id="KW-0812">Transmembrane</keyword>
<keyword id="KW-1133">Transmembrane helix</keyword>
<keyword id="KW-0813">Transport</keyword>
<keyword id="KW-0830">Ubiquinone</keyword>
<comment type="function">
    <text evidence="1">NDH-1 shuttles electrons from NADH, via FMN and iron-sulfur (Fe-S) centers, to quinones in the respiratory chain. The immediate electron acceptor for the enzyme in this species is believed to be ubiquinone. Couples the redox reaction to proton translocation (for every two electrons transferred, four hydrogen ions are translocated across the cytoplasmic membrane), and thus conserves the redox energy in a proton gradient.</text>
</comment>
<comment type="catalytic activity">
    <reaction evidence="1">
        <text>a quinone + NADH + 5 H(+)(in) = a quinol + NAD(+) + 4 H(+)(out)</text>
        <dbReference type="Rhea" id="RHEA:57888"/>
        <dbReference type="ChEBI" id="CHEBI:15378"/>
        <dbReference type="ChEBI" id="CHEBI:24646"/>
        <dbReference type="ChEBI" id="CHEBI:57540"/>
        <dbReference type="ChEBI" id="CHEBI:57945"/>
        <dbReference type="ChEBI" id="CHEBI:132124"/>
    </reaction>
</comment>
<comment type="subunit">
    <text evidence="1">NDH-1 is composed of 14 different subunits. Subunits NuoA, H, J, K, L, M, N constitute the membrane sector of the complex.</text>
</comment>
<comment type="subcellular location">
    <subcellularLocation>
        <location evidence="1">Cell inner membrane</location>
        <topology evidence="1">Multi-pass membrane protein</topology>
    </subcellularLocation>
</comment>
<comment type="similarity">
    <text evidence="1">Belongs to the complex I subunit 3 family.</text>
</comment>
<comment type="sequence caution" evidence="2">
    <conflict type="erroneous initiation">
        <sequence resource="EMBL-CDS" id="AAL03023"/>
    </conflict>
</comment>
<dbReference type="EC" id="7.1.1.-" evidence="1"/>
<dbReference type="EMBL" id="AE006914">
    <property type="protein sequence ID" value="AAL03023.1"/>
    <property type="status" value="ALT_INIT"/>
    <property type="molecule type" value="Genomic_DNA"/>
</dbReference>
<dbReference type="PIR" id="E97760">
    <property type="entry name" value="E97760"/>
</dbReference>
<dbReference type="RefSeq" id="WP_012737002.1">
    <property type="nucleotide sequence ID" value="NC_003103.1"/>
</dbReference>
<dbReference type="SMR" id="Q92ID5"/>
<dbReference type="KEGG" id="rco:RC0485"/>
<dbReference type="HOGENOM" id="CLU_119549_3_1_5"/>
<dbReference type="Proteomes" id="UP000000816">
    <property type="component" value="Chromosome"/>
</dbReference>
<dbReference type="GO" id="GO:0030964">
    <property type="term" value="C:NADH dehydrogenase complex"/>
    <property type="evidence" value="ECO:0007669"/>
    <property type="project" value="TreeGrafter"/>
</dbReference>
<dbReference type="GO" id="GO:0005886">
    <property type="term" value="C:plasma membrane"/>
    <property type="evidence" value="ECO:0007669"/>
    <property type="project" value="UniProtKB-SubCell"/>
</dbReference>
<dbReference type="GO" id="GO:0008137">
    <property type="term" value="F:NADH dehydrogenase (ubiquinone) activity"/>
    <property type="evidence" value="ECO:0007669"/>
    <property type="project" value="InterPro"/>
</dbReference>
<dbReference type="GO" id="GO:0050136">
    <property type="term" value="F:NADH:ubiquinone reductase (non-electrogenic) activity"/>
    <property type="evidence" value="ECO:0007669"/>
    <property type="project" value="UniProtKB-UniRule"/>
</dbReference>
<dbReference type="GO" id="GO:0048038">
    <property type="term" value="F:quinone binding"/>
    <property type="evidence" value="ECO:0007669"/>
    <property type="project" value="UniProtKB-KW"/>
</dbReference>
<dbReference type="FunFam" id="1.20.58.1610:FF:000004">
    <property type="entry name" value="NADH-quinone oxidoreductase subunit A"/>
    <property type="match status" value="1"/>
</dbReference>
<dbReference type="Gene3D" id="1.20.58.1610">
    <property type="entry name" value="NADH:ubiquinone/plastoquinone oxidoreductase, chain 3"/>
    <property type="match status" value="1"/>
</dbReference>
<dbReference type="HAMAP" id="MF_01394">
    <property type="entry name" value="NDH1_NuoA"/>
    <property type="match status" value="1"/>
</dbReference>
<dbReference type="InterPro" id="IPR023043">
    <property type="entry name" value="NAD(P)H_OxRDtase_bac/plastid"/>
</dbReference>
<dbReference type="InterPro" id="IPR000440">
    <property type="entry name" value="NADH_UbQ/plastoQ_OxRdtase_su3"/>
</dbReference>
<dbReference type="InterPro" id="IPR038430">
    <property type="entry name" value="NDAH_ubi_oxred_su3_sf"/>
</dbReference>
<dbReference type="PANTHER" id="PTHR11058">
    <property type="entry name" value="NADH-UBIQUINONE OXIDOREDUCTASE CHAIN 3"/>
    <property type="match status" value="1"/>
</dbReference>
<dbReference type="PANTHER" id="PTHR11058:SF9">
    <property type="entry name" value="NADH-UBIQUINONE OXIDOREDUCTASE CHAIN 3"/>
    <property type="match status" value="1"/>
</dbReference>
<dbReference type="Pfam" id="PF00507">
    <property type="entry name" value="Oxidored_q4"/>
    <property type="match status" value="1"/>
</dbReference>
<organism>
    <name type="scientific">Rickettsia conorii (strain ATCC VR-613 / Malish 7)</name>
    <dbReference type="NCBI Taxonomy" id="272944"/>
    <lineage>
        <taxon>Bacteria</taxon>
        <taxon>Pseudomonadati</taxon>
        <taxon>Pseudomonadota</taxon>
        <taxon>Alphaproteobacteria</taxon>
        <taxon>Rickettsiales</taxon>
        <taxon>Rickettsiaceae</taxon>
        <taxon>Rickettsieae</taxon>
        <taxon>Rickettsia</taxon>
        <taxon>spotted fever group</taxon>
    </lineage>
</organism>
<sequence>MLQNSELLQEYLPIAIFFGIAVLVSGLIMILPNLLSTKKYNKDKLEPYECGFEPFSDARSKFDICFYLVAILFIIFDLEIAFLVPWAISLNTIGKIGFFSMMFFLFVLIIGFIYEWKKGALDW</sequence>